<gene>
    <name evidence="1" type="primary">nqrD</name>
    <name type="ordered locus">HD_0382</name>
</gene>
<proteinExistence type="inferred from homology"/>
<protein>
    <recommendedName>
        <fullName evidence="1">Na(+)-translocating NADH-quinone reductase subunit D</fullName>
        <shortName evidence="1">Na(+)-NQR subunit D</shortName>
        <shortName evidence="1">Na(+)-translocating NQR subunit D</shortName>
        <ecNumber evidence="1">7.2.1.1</ecNumber>
    </recommendedName>
    <alternativeName>
        <fullName evidence="1">NQR complex subunit D</fullName>
    </alternativeName>
    <alternativeName>
        <fullName evidence="1">NQR-1 subunit D</fullName>
    </alternativeName>
</protein>
<organism>
    <name type="scientific">Haemophilus ducreyi (strain 35000HP / ATCC 700724)</name>
    <dbReference type="NCBI Taxonomy" id="233412"/>
    <lineage>
        <taxon>Bacteria</taxon>
        <taxon>Pseudomonadati</taxon>
        <taxon>Pseudomonadota</taxon>
        <taxon>Gammaproteobacteria</taxon>
        <taxon>Pasteurellales</taxon>
        <taxon>Pasteurellaceae</taxon>
        <taxon>Haemophilus</taxon>
    </lineage>
</organism>
<name>NQRD_HAEDU</name>
<keyword id="KW-0997">Cell inner membrane</keyword>
<keyword id="KW-1003">Cell membrane</keyword>
<keyword id="KW-0406">Ion transport</keyword>
<keyword id="KW-0472">Membrane</keyword>
<keyword id="KW-0520">NAD</keyword>
<keyword id="KW-1185">Reference proteome</keyword>
<keyword id="KW-0915">Sodium</keyword>
<keyword id="KW-0739">Sodium transport</keyword>
<keyword id="KW-1278">Translocase</keyword>
<keyword id="KW-0812">Transmembrane</keyword>
<keyword id="KW-1133">Transmembrane helix</keyword>
<keyword id="KW-0813">Transport</keyword>
<keyword id="KW-0830">Ubiquinone</keyword>
<reference key="1">
    <citation type="submission" date="2003-06" db="EMBL/GenBank/DDBJ databases">
        <title>The complete genome sequence of Haemophilus ducreyi.</title>
        <authorList>
            <person name="Munson R.S. Jr."/>
            <person name="Ray W.C."/>
            <person name="Mahairas G."/>
            <person name="Sabo P."/>
            <person name="Mungur R."/>
            <person name="Johnson L."/>
            <person name="Nguyen D."/>
            <person name="Wang J."/>
            <person name="Forst C."/>
            <person name="Hood L."/>
        </authorList>
    </citation>
    <scope>NUCLEOTIDE SEQUENCE [LARGE SCALE GENOMIC DNA]</scope>
    <source>
        <strain>35000HP / ATCC 700724</strain>
    </source>
</reference>
<comment type="function">
    <text evidence="1">NQR complex catalyzes the reduction of ubiquinone-1 to ubiquinol by two successive reactions, coupled with the transport of Na(+) ions from the cytoplasm to the periplasm. NqrA to NqrE are probably involved in the second step, the conversion of ubisemiquinone to ubiquinol.</text>
</comment>
<comment type="catalytic activity">
    <reaction evidence="1">
        <text>a ubiquinone + n Na(+)(in) + NADH + H(+) = a ubiquinol + n Na(+)(out) + NAD(+)</text>
        <dbReference type="Rhea" id="RHEA:47748"/>
        <dbReference type="Rhea" id="RHEA-COMP:9565"/>
        <dbReference type="Rhea" id="RHEA-COMP:9566"/>
        <dbReference type="ChEBI" id="CHEBI:15378"/>
        <dbReference type="ChEBI" id="CHEBI:16389"/>
        <dbReference type="ChEBI" id="CHEBI:17976"/>
        <dbReference type="ChEBI" id="CHEBI:29101"/>
        <dbReference type="ChEBI" id="CHEBI:57540"/>
        <dbReference type="ChEBI" id="CHEBI:57945"/>
        <dbReference type="EC" id="7.2.1.1"/>
    </reaction>
</comment>
<comment type="subunit">
    <text evidence="1">Composed of six subunits; NqrA, NqrB, NqrC, NqrD, NqrE and NqrF.</text>
</comment>
<comment type="subcellular location">
    <subcellularLocation>
        <location evidence="1">Cell inner membrane</location>
        <topology evidence="1">Multi-pass membrane protein</topology>
    </subcellularLocation>
</comment>
<comment type="similarity">
    <text evidence="1">Belongs to the NqrDE/RnfAE family.</text>
</comment>
<evidence type="ECO:0000255" key="1">
    <source>
        <dbReference type="HAMAP-Rule" id="MF_00428"/>
    </source>
</evidence>
<sequence>MANNNLKKLLLSPISDNNPIALQILGICSALAVTTQLQTAFVMAIAVSLVTAFSSMFISMIRNYIPNSIRIIVQMAIIASLVILVDQILRAYVYDLSKQLSVFVGLIITNCIVMGRAEAFAMKSAPLESFVDGIGNGLGYGAMLVIVAFLRELIGSGKIFGVTVLQTIQDGGWYQANGLFLLAPSAFFIIGFVIWAIRTWKPEQVEK</sequence>
<accession>Q7VNU6</accession>
<dbReference type="EC" id="7.2.1.1" evidence="1"/>
<dbReference type="EMBL" id="AE017143">
    <property type="protein sequence ID" value="AAP95352.1"/>
    <property type="molecule type" value="Genomic_DNA"/>
</dbReference>
<dbReference type="RefSeq" id="WP_010944405.1">
    <property type="nucleotide sequence ID" value="NC_002940.2"/>
</dbReference>
<dbReference type="SMR" id="Q7VNU6"/>
<dbReference type="STRING" id="233412.HD_0382"/>
<dbReference type="GeneID" id="60733722"/>
<dbReference type="KEGG" id="hdu:HD_0382"/>
<dbReference type="eggNOG" id="COG1347">
    <property type="taxonomic scope" value="Bacteria"/>
</dbReference>
<dbReference type="HOGENOM" id="CLU_046659_1_1_6"/>
<dbReference type="OrthoDB" id="9782945at2"/>
<dbReference type="Proteomes" id="UP000001022">
    <property type="component" value="Chromosome"/>
</dbReference>
<dbReference type="GO" id="GO:0005886">
    <property type="term" value="C:plasma membrane"/>
    <property type="evidence" value="ECO:0007669"/>
    <property type="project" value="UniProtKB-SubCell"/>
</dbReference>
<dbReference type="GO" id="GO:0016655">
    <property type="term" value="F:oxidoreductase activity, acting on NAD(P)H, quinone or similar compound as acceptor"/>
    <property type="evidence" value="ECO:0007669"/>
    <property type="project" value="UniProtKB-UniRule"/>
</dbReference>
<dbReference type="GO" id="GO:0006814">
    <property type="term" value="P:sodium ion transport"/>
    <property type="evidence" value="ECO:0007669"/>
    <property type="project" value="UniProtKB-UniRule"/>
</dbReference>
<dbReference type="HAMAP" id="MF_00428">
    <property type="entry name" value="NqrD"/>
    <property type="match status" value="1"/>
</dbReference>
<dbReference type="InterPro" id="IPR011292">
    <property type="entry name" value="NqrD"/>
</dbReference>
<dbReference type="InterPro" id="IPR003667">
    <property type="entry name" value="NqrDE/RnfAE"/>
</dbReference>
<dbReference type="NCBIfam" id="TIGR01939">
    <property type="entry name" value="nqrD"/>
    <property type="match status" value="1"/>
</dbReference>
<dbReference type="NCBIfam" id="NF006777">
    <property type="entry name" value="PRK09292.1"/>
    <property type="match status" value="1"/>
</dbReference>
<dbReference type="NCBIfam" id="NF009070">
    <property type="entry name" value="PRK12405.1"/>
    <property type="match status" value="1"/>
</dbReference>
<dbReference type="PANTHER" id="PTHR30586">
    <property type="entry name" value="ELECTRON TRANSPORT COMPLEX PROTEIN RNFE"/>
    <property type="match status" value="1"/>
</dbReference>
<dbReference type="PANTHER" id="PTHR30586:SF1">
    <property type="entry name" value="NA(+)-TRANSLOCATING NADH-QUINONE REDUCTASE SUBUNIT D"/>
    <property type="match status" value="1"/>
</dbReference>
<dbReference type="Pfam" id="PF02508">
    <property type="entry name" value="Rnf-Nqr"/>
    <property type="match status" value="1"/>
</dbReference>
<dbReference type="PIRSF" id="PIRSF006102">
    <property type="entry name" value="NQR_DE"/>
    <property type="match status" value="1"/>
</dbReference>
<feature type="chain" id="PRO_0000214233" description="Na(+)-translocating NADH-quinone reductase subunit D">
    <location>
        <begin position="1"/>
        <end position="207"/>
    </location>
</feature>
<feature type="transmembrane region" description="Helical" evidence="1">
    <location>
        <begin position="20"/>
        <end position="40"/>
    </location>
</feature>
<feature type="transmembrane region" description="Helical" evidence="1">
    <location>
        <begin position="41"/>
        <end position="61"/>
    </location>
</feature>
<feature type="transmembrane region" description="Helical" evidence="1">
    <location>
        <begin position="69"/>
        <end position="89"/>
    </location>
</feature>
<feature type="transmembrane region" description="Helical" evidence="1">
    <location>
        <begin position="102"/>
        <end position="122"/>
    </location>
</feature>
<feature type="transmembrane region" description="Helical" evidence="1">
    <location>
        <begin position="130"/>
        <end position="150"/>
    </location>
</feature>
<feature type="transmembrane region" description="Helical" evidence="1">
    <location>
        <begin position="177"/>
        <end position="197"/>
    </location>
</feature>